<gene>
    <name evidence="1" type="primary">dnaJ</name>
    <name type="ordered locus">ECH_0025</name>
</gene>
<name>DNAJ_EHRCR</name>
<proteinExistence type="inferred from homology"/>
<feature type="chain" id="PRO_1000085192" description="Chaperone protein DnaJ">
    <location>
        <begin position="1"/>
        <end position="380"/>
    </location>
</feature>
<feature type="domain" description="J" evidence="1">
    <location>
        <begin position="5"/>
        <end position="70"/>
    </location>
</feature>
<feature type="repeat" description="CXXCXGXG motif">
    <location>
        <begin position="150"/>
        <end position="157"/>
    </location>
</feature>
<feature type="repeat" description="CXXCXGXG motif">
    <location>
        <begin position="167"/>
        <end position="174"/>
    </location>
</feature>
<feature type="repeat" description="CXXCXGXG motif">
    <location>
        <begin position="189"/>
        <end position="196"/>
    </location>
</feature>
<feature type="repeat" description="CXXCXGXG motif">
    <location>
        <begin position="203"/>
        <end position="210"/>
    </location>
</feature>
<feature type="zinc finger region" description="CR-type" evidence="1">
    <location>
        <begin position="137"/>
        <end position="215"/>
    </location>
</feature>
<feature type="binding site" evidence="1">
    <location>
        <position position="150"/>
    </location>
    <ligand>
        <name>Zn(2+)</name>
        <dbReference type="ChEBI" id="CHEBI:29105"/>
        <label>1</label>
    </ligand>
</feature>
<feature type="binding site" evidence="1">
    <location>
        <position position="153"/>
    </location>
    <ligand>
        <name>Zn(2+)</name>
        <dbReference type="ChEBI" id="CHEBI:29105"/>
        <label>1</label>
    </ligand>
</feature>
<feature type="binding site" evidence="1">
    <location>
        <position position="167"/>
    </location>
    <ligand>
        <name>Zn(2+)</name>
        <dbReference type="ChEBI" id="CHEBI:29105"/>
        <label>2</label>
    </ligand>
</feature>
<feature type="binding site" evidence="1">
    <location>
        <position position="170"/>
    </location>
    <ligand>
        <name>Zn(2+)</name>
        <dbReference type="ChEBI" id="CHEBI:29105"/>
        <label>2</label>
    </ligand>
</feature>
<feature type="binding site" evidence="1">
    <location>
        <position position="189"/>
    </location>
    <ligand>
        <name>Zn(2+)</name>
        <dbReference type="ChEBI" id="CHEBI:29105"/>
        <label>2</label>
    </ligand>
</feature>
<feature type="binding site" evidence="1">
    <location>
        <position position="192"/>
    </location>
    <ligand>
        <name>Zn(2+)</name>
        <dbReference type="ChEBI" id="CHEBI:29105"/>
        <label>2</label>
    </ligand>
</feature>
<feature type="binding site" evidence="1">
    <location>
        <position position="203"/>
    </location>
    <ligand>
        <name>Zn(2+)</name>
        <dbReference type="ChEBI" id="CHEBI:29105"/>
        <label>1</label>
    </ligand>
</feature>
<feature type="binding site" evidence="1">
    <location>
        <position position="206"/>
    </location>
    <ligand>
        <name>Zn(2+)</name>
        <dbReference type="ChEBI" id="CHEBI:29105"/>
        <label>1</label>
    </ligand>
</feature>
<keyword id="KW-0143">Chaperone</keyword>
<keyword id="KW-0963">Cytoplasm</keyword>
<keyword id="KW-0235">DNA replication</keyword>
<keyword id="KW-0479">Metal-binding</keyword>
<keyword id="KW-1185">Reference proteome</keyword>
<keyword id="KW-0677">Repeat</keyword>
<keyword id="KW-0346">Stress response</keyword>
<keyword id="KW-0862">Zinc</keyword>
<keyword id="KW-0863">Zinc-finger</keyword>
<comment type="function">
    <text evidence="1">Participates actively in the response to hyperosmotic and heat shock by preventing the aggregation of stress-denatured proteins and by disaggregating proteins, also in an autonomous, DnaK-independent fashion. Unfolded proteins bind initially to DnaJ; upon interaction with the DnaJ-bound protein, DnaK hydrolyzes its bound ATP, resulting in the formation of a stable complex. GrpE releases ADP from DnaK; ATP binding to DnaK triggers the release of the substrate protein, thus completing the reaction cycle. Several rounds of ATP-dependent interactions between DnaJ, DnaK and GrpE are required for fully efficient folding. Also involved, together with DnaK and GrpE, in the DNA replication of plasmids through activation of initiation proteins.</text>
</comment>
<comment type="cofactor">
    <cofactor evidence="1">
        <name>Zn(2+)</name>
        <dbReference type="ChEBI" id="CHEBI:29105"/>
    </cofactor>
    <text evidence="1">Binds 2 Zn(2+) ions per monomer.</text>
</comment>
<comment type="subunit">
    <text evidence="1">Homodimer.</text>
</comment>
<comment type="subcellular location">
    <subcellularLocation>
        <location evidence="1">Cytoplasm</location>
    </subcellularLocation>
</comment>
<comment type="domain">
    <text evidence="1">The J domain is necessary and sufficient to stimulate DnaK ATPase activity. Zinc center 1 plays an important role in the autonomous, DnaK-independent chaperone activity of DnaJ. Zinc center 2 is essential for interaction with DnaK and for DnaJ activity.</text>
</comment>
<comment type="similarity">
    <text evidence="1">Belongs to the DnaJ family.</text>
</comment>
<protein>
    <recommendedName>
        <fullName evidence="1">Chaperone protein DnaJ</fullName>
    </recommendedName>
</protein>
<dbReference type="EMBL" id="CP000236">
    <property type="protein sequence ID" value="ABD44504.1"/>
    <property type="molecule type" value="Genomic_DNA"/>
</dbReference>
<dbReference type="RefSeq" id="WP_006011660.1">
    <property type="nucleotide sequence ID" value="NC_007799.1"/>
</dbReference>
<dbReference type="SMR" id="Q2GI75"/>
<dbReference type="STRING" id="205920.ECH_0025"/>
<dbReference type="KEGG" id="ech:ECH_0025"/>
<dbReference type="eggNOG" id="COG0484">
    <property type="taxonomic scope" value="Bacteria"/>
</dbReference>
<dbReference type="HOGENOM" id="CLU_017633_0_7_5"/>
<dbReference type="OrthoDB" id="9779889at2"/>
<dbReference type="Proteomes" id="UP000008320">
    <property type="component" value="Chromosome"/>
</dbReference>
<dbReference type="GO" id="GO:0005737">
    <property type="term" value="C:cytoplasm"/>
    <property type="evidence" value="ECO:0007669"/>
    <property type="project" value="UniProtKB-SubCell"/>
</dbReference>
<dbReference type="GO" id="GO:0005524">
    <property type="term" value="F:ATP binding"/>
    <property type="evidence" value="ECO:0007669"/>
    <property type="project" value="InterPro"/>
</dbReference>
<dbReference type="GO" id="GO:0031072">
    <property type="term" value="F:heat shock protein binding"/>
    <property type="evidence" value="ECO:0007669"/>
    <property type="project" value="InterPro"/>
</dbReference>
<dbReference type="GO" id="GO:0051082">
    <property type="term" value="F:unfolded protein binding"/>
    <property type="evidence" value="ECO:0007669"/>
    <property type="project" value="UniProtKB-UniRule"/>
</dbReference>
<dbReference type="GO" id="GO:0008270">
    <property type="term" value="F:zinc ion binding"/>
    <property type="evidence" value="ECO:0007669"/>
    <property type="project" value="UniProtKB-UniRule"/>
</dbReference>
<dbReference type="GO" id="GO:0051085">
    <property type="term" value="P:chaperone cofactor-dependent protein refolding"/>
    <property type="evidence" value="ECO:0007669"/>
    <property type="project" value="TreeGrafter"/>
</dbReference>
<dbReference type="GO" id="GO:0006260">
    <property type="term" value="P:DNA replication"/>
    <property type="evidence" value="ECO:0007669"/>
    <property type="project" value="UniProtKB-KW"/>
</dbReference>
<dbReference type="GO" id="GO:0042026">
    <property type="term" value="P:protein refolding"/>
    <property type="evidence" value="ECO:0007669"/>
    <property type="project" value="TreeGrafter"/>
</dbReference>
<dbReference type="GO" id="GO:0009408">
    <property type="term" value="P:response to heat"/>
    <property type="evidence" value="ECO:0007669"/>
    <property type="project" value="InterPro"/>
</dbReference>
<dbReference type="CDD" id="cd06257">
    <property type="entry name" value="DnaJ"/>
    <property type="match status" value="1"/>
</dbReference>
<dbReference type="CDD" id="cd10747">
    <property type="entry name" value="DnaJ_C"/>
    <property type="match status" value="1"/>
</dbReference>
<dbReference type="CDD" id="cd10719">
    <property type="entry name" value="DnaJ_zf"/>
    <property type="match status" value="1"/>
</dbReference>
<dbReference type="FunFam" id="1.10.287.110:FF:000034">
    <property type="entry name" value="Chaperone protein DnaJ"/>
    <property type="match status" value="1"/>
</dbReference>
<dbReference type="FunFam" id="2.10.230.10:FF:000002">
    <property type="entry name" value="Molecular chaperone DnaJ"/>
    <property type="match status" value="1"/>
</dbReference>
<dbReference type="FunFam" id="2.60.260.20:FF:000004">
    <property type="entry name" value="Molecular chaperone DnaJ"/>
    <property type="match status" value="1"/>
</dbReference>
<dbReference type="Gene3D" id="1.10.287.110">
    <property type="entry name" value="DnaJ domain"/>
    <property type="match status" value="1"/>
</dbReference>
<dbReference type="Gene3D" id="2.10.230.10">
    <property type="entry name" value="Heat shock protein DnaJ, cysteine-rich domain"/>
    <property type="match status" value="1"/>
</dbReference>
<dbReference type="Gene3D" id="2.60.260.20">
    <property type="entry name" value="Urease metallochaperone UreE, N-terminal domain"/>
    <property type="match status" value="2"/>
</dbReference>
<dbReference type="HAMAP" id="MF_01152">
    <property type="entry name" value="DnaJ"/>
    <property type="match status" value="1"/>
</dbReference>
<dbReference type="InterPro" id="IPR012724">
    <property type="entry name" value="DnaJ"/>
</dbReference>
<dbReference type="InterPro" id="IPR002939">
    <property type="entry name" value="DnaJ_C"/>
</dbReference>
<dbReference type="InterPro" id="IPR001623">
    <property type="entry name" value="DnaJ_domain"/>
</dbReference>
<dbReference type="InterPro" id="IPR018253">
    <property type="entry name" value="DnaJ_domain_CS"/>
</dbReference>
<dbReference type="InterPro" id="IPR008971">
    <property type="entry name" value="HSP40/DnaJ_pept-bd"/>
</dbReference>
<dbReference type="InterPro" id="IPR001305">
    <property type="entry name" value="HSP_DnaJ_Cys-rich_dom"/>
</dbReference>
<dbReference type="InterPro" id="IPR036410">
    <property type="entry name" value="HSP_DnaJ_Cys-rich_dom_sf"/>
</dbReference>
<dbReference type="InterPro" id="IPR036869">
    <property type="entry name" value="J_dom_sf"/>
</dbReference>
<dbReference type="NCBIfam" id="TIGR02349">
    <property type="entry name" value="DnaJ_bact"/>
    <property type="match status" value="1"/>
</dbReference>
<dbReference type="NCBIfam" id="NF008035">
    <property type="entry name" value="PRK10767.1"/>
    <property type="match status" value="1"/>
</dbReference>
<dbReference type="PANTHER" id="PTHR43096:SF48">
    <property type="entry name" value="CHAPERONE PROTEIN DNAJ"/>
    <property type="match status" value="1"/>
</dbReference>
<dbReference type="PANTHER" id="PTHR43096">
    <property type="entry name" value="DNAJ HOMOLOG 1, MITOCHONDRIAL-RELATED"/>
    <property type="match status" value="1"/>
</dbReference>
<dbReference type="Pfam" id="PF00226">
    <property type="entry name" value="DnaJ"/>
    <property type="match status" value="1"/>
</dbReference>
<dbReference type="Pfam" id="PF01556">
    <property type="entry name" value="DnaJ_C"/>
    <property type="match status" value="1"/>
</dbReference>
<dbReference type="Pfam" id="PF00684">
    <property type="entry name" value="DnaJ_CXXCXGXG"/>
    <property type="match status" value="1"/>
</dbReference>
<dbReference type="PRINTS" id="PR00625">
    <property type="entry name" value="JDOMAIN"/>
</dbReference>
<dbReference type="SMART" id="SM00271">
    <property type="entry name" value="DnaJ"/>
    <property type="match status" value="1"/>
</dbReference>
<dbReference type="SUPFAM" id="SSF46565">
    <property type="entry name" value="Chaperone J-domain"/>
    <property type="match status" value="1"/>
</dbReference>
<dbReference type="SUPFAM" id="SSF57938">
    <property type="entry name" value="DnaJ/Hsp40 cysteine-rich domain"/>
    <property type="match status" value="1"/>
</dbReference>
<dbReference type="SUPFAM" id="SSF49493">
    <property type="entry name" value="HSP40/DnaJ peptide-binding domain"/>
    <property type="match status" value="2"/>
</dbReference>
<dbReference type="PROSITE" id="PS00636">
    <property type="entry name" value="DNAJ_1"/>
    <property type="match status" value="1"/>
</dbReference>
<dbReference type="PROSITE" id="PS50076">
    <property type="entry name" value="DNAJ_2"/>
    <property type="match status" value="1"/>
</dbReference>
<dbReference type="PROSITE" id="PS51188">
    <property type="entry name" value="ZF_CR"/>
    <property type="match status" value="1"/>
</dbReference>
<organism>
    <name type="scientific">Ehrlichia chaffeensis (strain ATCC CRL-10679 / Arkansas)</name>
    <dbReference type="NCBI Taxonomy" id="205920"/>
    <lineage>
        <taxon>Bacteria</taxon>
        <taxon>Pseudomonadati</taxon>
        <taxon>Pseudomonadota</taxon>
        <taxon>Alphaproteobacteria</taxon>
        <taxon>Rickettsiales</taxon>
        <taxon>Anaplasmataceae</taxon>
        <taxon>Ehrlichia</taxon>
    </lineage>
</organism>
<accession>Q2GI75</accession>
<reference key="1">
    <citation type="journal article" date="2006" name="PLoS Genet.">
        <title>Comparative genomics of emerging human ehrlichiosis agents.</title>
        <authorList>
            <person name="Dunning Hotopp J.C."/>
            <person name="Lin M."/>
            <person name="Madupu R."/>
            <person name="Crabtree J."/>
            <person name="Angiuoli S.V."/>
            <person name="Eisen J.A."/>
            <person name="Seshadri R."/>
            <person name="Ren Q."/>
            <person name="Wu M."/>
            <person name="Utterback T.R."/>
            <person name="Smith S."/>
            <person name="Lewis M."/>
            <person name="Khouri H."/>
            <person name="Zhang C."/>
            <person name="Niu H."/>
            <person name="Lin Q."/>
            <person name="Ohashi N."/>
            <person name="Zhi N."/>
            <person name="Nelson W.C."/>
            <person name="Brinkac L.M."/>
            <person name="Dodson R.J."/>
            <person name="Rosovitz M.J."/>
            <person name="Sundaram J.P."/>
            <person name="Daugherty S.C."/>
            <person name="Davidsen T."/>
            <person name="Durkin A.S."/>
            <person name="Gwinn M.L."/>
            <person name="Haft D.H."/>
            <person name="Selengut J.D."/>
            <person name="Sullivan S.A."/>
            <person name="Zafar N."/>
            <person name="Zhou L."/>
            <person name="Benahmed F."/>
            <person name="Forberger H."/>
            <person name="Halpin R."/>
            <person name="Mulligan S."/>
            <person name="Robinson J."/>
            <person name="White O."/>
            <person name="Rikihisa Y."/>
            <person name="Tettelin H."/>
        </authorList>
    </citation>
    <scope>NUCLEOTIDE SEQUENCE [LARGE SCALE GENOMIC DNA]</scope>
    <source>
        <strain>ATCC CRL-10679 / Arkansas</strain>
    </source>
</reference>
<sequence>MSKSDYYDLLGVSKSATPEEIKKAYRKMALKYHPDKNPGNKEAEEKFKELSEAYDVLIDQDKRAAYDKYGHNAFDSSGRGGFDFNSGFSGDFSDIFNDLFGGGFRGGRGSSRRHDSGAVGSDLRFDIEITLEDSFNGKKVPISYVTYVKCSSCSGSGSEGSAKSVQCSTCHGVGNVRTQQGFFTIERTCHVCNGEGEIIQNKCKKCSGSGRVRDEVNLLVTIPKGIESGNKIRLNGKGEAGYRGARSGDLYVYSNIQKHKFFTRNGSDLYCNVPIKMTLAALGGHIEMPSIDGTWTKVKVPEGSQNGDKLRLKEKGMPIINSSKRGDMYIQITVETPVKLTKKQKELLQKFDDEPNVDCNPQSTGFFQKVKSFWKDIRSN</sequence>
<evidence type="ECO:0000255" key="1">
    <source>
        <dbReference type="HAMAP-Rule" id="MF_01152"/>
    </source>
</evidence>